<evidence type="ECO:0000250" key="1"/>
<evidence type="ECO:0000255" key="2">
    <source>
        <dbReference type="HAMAP-Rule" id="MF_01057"/>
    </source>
</evidence>
<reference key="1">
    <citation type="journal article" date="2009" name="J. Bacteriol.">
        <title>Role of conjugative elements in the evolution of the multidrug-resistant pandemic clone Streptococcus pneumoniae Spain23F ST81.</title>
        <authorList>
            <person name="Croucher N.J."/>
            <person name="Walker D."/>
            <person name="Romero P."/>
            <person name="Lennard N."/>
            <person name="Paterson G.K."/>
            <person name="Bason N.C."/>
            <person name="Mitchell A.M."/>
            <person name="Quail M.A."/>
            <person name="Andrew P.W."/>
            <person name="Parkhill J."/>
            <person name="Bentley S.D."/>
            <person name="Mitchell T.J."/>
        </authorList>
    </citation>
    <scope>NUCLEOTIDE SEQUENCE [LARGE SCALE GENOMIC DNA]</scope>
    <source>
        <strain>ATCC 700669 / Spain 23F-1</strain>
    </source>
</reference>
<gene>
    <name evidence="2" type="primary">trmB</name>
    <name type="ordered locus">SPN23F04970</name>
</gene>
<accession>B8ZM88</accession>
<dbReference type="EC" id="2.1.1.33" evidence="2"/>
<dbReference type="EMBL" id="FM211187">
    <property type="protein sequence ID" value="CAR68347.1"/>
    <property type="molecule type" value="Genomic_DNA"/>
</dbReference>
<dbReference type="RefSeq" id="WP_001266083.1">
    <property type="nucleotide sequence ID" value="NC_011900.1"/>
</dbReference>
<dbReference type="SMR" id="B8ZM88"/>
<dbReference type="GeneID" id="45654031"/>
<dbReference type="KEGG" id="sne:SPN23F04970"/>
<dbReference type="HOGENOM" id="CLU_050910_2_1_9"/>
<dbReference type="UniPathway" id="UPA00989"/>
<dbReference type="GO" id="GO:0043527">
    <property type="term" value="C:tRNA methyltransferase complex"/>
    <property type="evidence" value="ECO:0007669"/>
    <property type="project" value="TreeGrafter"/>
</dbReference>
<dbReference type="GO" id="GO:0008176">
    <property type="term" value="F:tRNA (guanine(46)-N7)-methyltransferase activity"/>
    <property type="evidence" value="ECO:0007669"/>
    <property type="project" value="UniProtKB-UniRule"/>
</dbReference>
<dbReference type="CDD" id="cd02440">
    <property type="entry name" value="AdoMet_MTases"/>
    <property type="match status" value="1"/>
</dbReference>
<dbReference type="FunFam" id="3.40.50.150:FF:000035">
    <property type="entry name" value="tRNA (guanine-N(7)-)-methyltransferase"/>
    <property type="match status" value="1"/>
</dbReference>
<dbReference type="Gene3D" id="3.40.50.150">
    <property type="entry name" value="Vaccinia Virus protein VP39"/>
    <property type="match status" value="1"/>
</dbReference>
<dbReference type="HAMAP" id="MF_01057">
    <property type="entry name" value="tRNA_methyltr_TrmB"/>
    <property type="match status" value="1"/>
</dbReference>
<dbReference type="InterPro" id="IPR029063">
    <property type="entry name" value="SAM-dependent_MTases_sf"/>
</dbReference>
<dbReference type="InterPro" id="IPR003358">
    <property type="entry name" value="tRNA_(Gua-N-7)_MeTrfase_Trmb"/>
</dbReference>
<dbReference type="InterPro" id="IPR055361">
    <property type="entry name" value="tRNA_methyltr_TrmB_bact"/>
</dbReference>
<dbReference type="NCBIfam" id="NF001080">
    <property type="entry name" value="PRK00121.2-2"/>
    <property type="match status" value="1"/>
</dbReference>
<dbReference type="NCBIfam" id="TIGR00091">
    <property type="entry name" value="tRNA (guanosine(46)-N7)-methyltransferase TrmB"/>
    <property type="match status" value="1"/>
</dbReference>
<dbReference type="PANTHER" id="PTHR23417">
    <property type="entry name" value="3-DEOXY-D-MANNO-OCTULOSONIC-ACID TRANSFERASE/TRNA GUANINE-N 7 - -METHYLTRANSFERASE"/>
    <property type="match status" value="1"/>
</dbReference>
<dbReference type="PANTHER" id="PTHR23417:SF14">
    <property type="entry name" value="PENTACOTRIPEPTIDE-REPEAT REGION OF PRORP DOMAIN-CONTAINING PROTEIN"/>
    <property type="match status" value="1"/>
</dbReference>
<dbReference type="Pfam" id="PF02390">
    <property type="entry name" value="Methyltransf_4"/>
    <property type="match status" value="1"/>
</dbReference>
<dbReference type="SUPFAM" id="SSF53335">
    <property type="entry name" value="S-adenosyl-L-methionine-dependent methyltransferases"/>
    <property type="match status" value="1"/>
</dbReference>
<dbReference type="PROSITE" id="PS51625">
    <property type="entry name" value="SAM_MT_TRMB"/>
    <property type="match status" value="1"/>
</dbReference>
<name>TRMB_STRPJ</name>
<protein>
    <recommendedName>
        <fullName evidence="2">tRNA (guanine-N(7)-)-methyltransferase</fullName>
        <ecNumber evidence="2">2.1.1.33</ecNumber>
    </recommendedName>
    <alternativeName>
        <fullName evidence="2">tRNA (guanine(46)-N(7))-methyltransferase</fullName>
    </alternativeName>
    <alternativeName>
        <fullName evidence="2">tRNA(m7G46)-methyltransferase</fullName>
    </alternativeName>
</protein>
<organism>
    <name type="scientific">Streptococcus pneumoniae (strain ATCC 700669 / Spain 23F-1)</name>
    <dbReference type="NCBI Taxonomy" id="561276"/>
    <lineage>
        <taxon>Bacteria</taxon>
        <taxon>Bacillati</taxon>
        <taxon>Bacillota</taxon>
        <taxon>Bacilli</taxon>
        <taxon>Lactobacillales</taxon>
        <taxon>Streptococcaceae</taxon>
        <taxon>Streptococcus</taxon>
    </lineage>
</organism>
<proteinExistence type="inferred from homology"/>
<keyword id="KW-0489">Methyltransferase</keyword>
<keyword id="KW-0949">S-adenosyl-L-methionine</keyword>
<keyword id="KW-0808">Transferase</keyword>
<keyword id="KW-0819">tRNA processing</keyword>
<feature type="chain" id="PRO_1000149666" description="tRNA (guanine-N(7)-)-methyltransferase">
    <location>
        <begin position="1"/>
        <end position="211"/>
    </location>
</feature>
<feature type="region of interest" description="Interaction with RNA" evidence="2">
    <location>
        <begin position="124"/>
        <end position="129"/>
    </location>
</feature>
<feature type="active site" evidence="1">
    <location>
        <position position="118"/>
    </location>
</feature>
<feature type="binding site" evidence="2">
    <location>
        <position position="44"/>
    </location>
    <ligand>
        <name>S-adenosyl-L-methionine</name>
        <dbReference type="ChEBI" id="CHEBI:59789"/>
    </ligand>
</feature>
<feature type="binding site" evidence="2">
    <location>
        <position position="69"/>
    </location>
    <ligand>
        <name>S-adenosyl-L-methionine</name>
        <dbReference type="ChEBI" id="CHEBI:59789"/>
    </ligand>
</feature>
<feature type="binding site" evidence="2">
    <location>
        <position position="96"/>
    </location>
    <ligand>
        <name>S-adenosyl-L-methionine</name>
        <dbReference type="ChEBI" id="CHEBI:59789"/>
    </ligand>
</feature>
<feature type="binding site" evidence="2">
    <location>
        <position position="118"/>
    </location>
    <ligand>
        <name>S-adenosyl-L-methionine</name>
        <dbReference type="ChEBI" id="CHEBI:59789"/>
    </ligand>
</feature>
<feature type="binding site" evidence="2">
    <location>
        <position position="122"/>
    </location>
    <ligand>
        <name>substrate</name>
    </ligand>
</feature>
<feature type="binding site" evidence="2">
    <location>
        <position position="154"/>
    </location>
    <ligand>
        <name>substrate</name>
    </ligand>
</feature>
<feature type="binding site" evidence="2">
    <location>
        <begin position="191"/>
        <end position="194"/>
    </location>
    <ligand>
        <name>substrate</name>
    </ligand>
</feature>
<comment type="function">
    <text evidence="2">Catalyzes the formation of N(7)-methylguanine at position 46 (m7G46) in tRNA.</text>
</comment>
<comment type="catalytic activity">
    <reaction evidence="2">
        <text>guanosine(46) in tRNA + S-adenosyl-L-methionine = N(7)-methylguanosine(46) in tRNA + S-adenosyl-L-homocysteine</text>
        <dbReference type="Rhea" id="RHEA:42708"/>
        <dbReference type="Rhea" id="RHEA-COMP:10188"/>
        <dbReference type="Rhea" id="RHEA-COMP:10189"/>
        <dbReference type="ChEBI" id="CHEBI:57856"/>
        <dbReference type="ChEBI" id="CHEBI:59789"/>
        <dbReference type="ChEBI" id="CHEBI:74269"/>
        <dbReference type="ChEBI" id="CHEBI:74480"/>
        <dbReference type="EC" id="2.1.1.33"/>
    </reaction>
</comment>
<comment type="pathway">
    <text evidence="2">tRNA modification; N(7)-methylguanine-tRNA biosynthesis.</text>
</comment>
<comment type="similarity">
    <text evidence="2">Belongs to the class I-like SAM-binding methyltransferase superfamily. TrmB family.</text>
</comment>
<sequence>MRVRNRKGATELLEANPQYVVLNPLEAKAKWRDLFGNDNPIHVEVGSGKGAFVSGMAKQNPDINYIGIDIQKSVLSYALDKVLEVGVPNIKLLWVDGSDLTDYFEDGEIDRLYLNFSDPWPKKRHEKRRLTYKTFLDTFKRILPENGEIHFKTDNRGLFEYSLVSFSQYGMKLNGVWLDLHASDFEGNVMTEYEQKFSNKGQVIYRVEAEF</sequence>